<dbReference type="EMBL" id="X59939">
    <property type="protein sequence ID" value="CAA42563.1"/>
    <property type="molecule type" value="Genomic_DNA"/>
</dbReference>
<dbReference type="EMBL" id="U00096">
    <property type="protein sequence ID" value="AAC74135.2"/>
    <property type="molecule type" value="Genomic_DNA"/>
</dbReference>
<dbReference type="EMBL" id="AP009048">
    <property type="protein sequence ID" value="BAA35850.1"/>
    <property type="molecule type" value="Genomic_DNA"/>
</dbReference>
<dbReference type="RefSeq" id="NP_415569.4">
    <property type="nucleotide sequence ID" value="NC_000913.3"/>
</dbReference>
<dbReference type="RefSeq" id="WP_000180056.1">
    <property type="nucleotide sequence ID" value="NZ_STEB01000016.1"/>
</dbReference>
<dbReference type="PDB" id="8IMQ">
    <property type="method" value="NMR"/>
    <property type="chains" value="A=1-124"/>
</dbReference>
<dbReference type="PDBsum" id="8IMQ"/>
<dbReference type="SMR" id="P25738"/>
<dbReference type="BioGRID" id="4261517">
    <property type="interactions" value="15"/>
</dbReference>
<dbReference type="DIP" id="DIP-10265N"/>
<dbReference type="FunCoup" id="P25738">
    <property type="interactions" value="74"/>
</dbReference>
<dbReference type="IntAct" id="P25738">
    <property type="interactions" value="9"/>
</dbReference>
<dbReference type="STRING" id="511145.b1051"/>
<dbReference type="jPOST" id="P25738"/>
<dbReference type="PaxDb" id="511145-b1051"/>
<dbReference type="EnsemblBacteria" id="AAC74135">
    <property type="protein sequence ID" value="AAC74135"/>
    <property type="gene ID" value="b1051"/>
</dbReference>
<dbReference type="GeneID" id="945612"/>
<dbReference type="KEGG" id="ecj:JW1039"/>
<dbReference type="KEGG" id="eco:b1051"/>
<dbReference type="KEGG" id="ecoc:C3026_06400"/>
<dbReference type="PATRIC" id="fig|1411691.4.peg.1217"/>
<dbReference type="EchoBASE" id="EB1314"/>
<dbReference type="eggNOG" id="ENOG502ZPAE">
    <property type="taxonomic scope" value="Bacteria"/>
</dbReference>
<dbReference type="HOGENOM" id="CLU_162701_0_0_6"/>
<dbReference type="InParanoid" id="P25738"/>
<dbReference type="OMA" id="NTLHEWE"/>
<dbReference type="OrthoDB" id="6414156at2"/>
<dbReference type="PhylomeDB" id="P25738"/>
<dbReference type="BioCyc" id="EcoCyc:EG11338-MONOMER"/>
<dbReference type="PRO" id="PR:P25738"/>
<dbReference type="Proteomes" id="UP000000625">
    <property type="component" value="Chromosome"/>
</dbReference>
<dbReference type="GO" id="GO:0005829">
    <property type="term" value="C:cytosol"/>
    <property type="evidence" value="ECO:0000314"/>
    <property type="project" value="EcoCyc"/>
</dbReference>
<dbReference type="InterPro" id="IPR025729">
    <property type="entry name" value="MsyB"/>
</dbReference>
<dbReference type="NCBIfam" id="NF008544">
    <property type="entry name" value="PRK11467.1"/>
    <property type="match status" value="1"/>
</dbReference>
<dbReference type="Pfam" id="PF13984">
    <property type="entry name" value="MsyB"/>
    <property type="match status" value="1"/>
</dbReference>
<sequence>MTMYATLEEAIDAAREEFLADNPGIDAEDANVQQFNAQKYVLQDGDIMWQVEFFADEGEEGECLPMLSGEAAQSVFDGDYDEIEIRQEWQEENTLHEWDEGEFQLEPPLDTEEGRAAADEWDER</sequence>
<proteinExistence type="evidence at protein level"/>
<feature type="chain" id="PRO_0000096609" description="Acidic protein MsyB">
    <location>
        <begin position="1"/>
        <end position="124"/>
    </location>
</feature>
<feature type="region of interest" description="Disordered" evidence="1">
    <location>
        <begin position="96"/>
        <end position="124"/>
    </location>
</feature>
<feature type="compositionally biased region" description="Basic and acidic residues" evidence="1">
    <location>
        <begin position="112"/>
        <end position="124"/>
    </location>
</feature>
<feature type="helix" evidence="2">
    <location>
        <begin position="7"/>
        <end position="21"/>
    </location>
</feature>
<feature type="turn" evidence="2">
    <location>
        <begin position="23"/>
        <end position="29"/>
    </location>
</feature>
<feature type="strand" evidence="2">
    <location>
        <begin position="36"/>
        <end position="38"/>
    </location>
</feature>
<feature type="strand" evidence="2">
    <location>
        <begin position="50"/>
        <end position="52"/>
    </location>
</feature>
<feature type="strand" evidence="2">
    <location>
        <begin position="62"/>
        <end position="65"/>
    </location>
</feature>
<feature type="helix" evidence="2">
    <location>
        <begin position="70"/>
        <end position="77"/>
    </location>
</feature>
<feature type="helix" evidence="2">
    <location>
        <begin position="82"/>
        <end position="87"/>
    </location>
</feature>
<feature type="turn" evidence="2">
    <location>
        <begin position="91"/>
        <end position="93"/>
    </location>
</feature>
<feature type="strand" evidence="2">
    <location>
        <begin position="100"/>
        <end position="103"/>
    </location>
</feature>
<feature type="strand" evidence="2">
    <location>
        <begin position="109"/>
        <end position="111"/>
    </location>
</feature>
<feature type="strand" evidence="2">
    <location>
        <begin position="115"/>
        <end position="117"/>
    </location>
</feature>
<gene>
    <name type="primary">msyB</name>
    <name type="ordered locus">b1051</name>
    <name type="ordered locus">JW1039</name>
</gene>
<comment type="function">
    <text>Could participate in the normal pathway of protein export.</text>
</comment>
<organism>
    <name type="scientific">Escherichia coli (strain K12)</name>
    <dbReference type="NCBI Taxonomy" id="83333"/>
    <lineage>
        <taxon>Bacteria</taxon>
        <taxon>Pseudomonadati</taxon>
        <taxon>Pseudomonadota</taxon>
        <taxon>Gammaproteobacteria</taxon>
        <taxon>Enterobacterales</taxon>
        <taxon>Enterobacteriaceae</taxon>
        <taxon>Escherichia</taxon>
    </lineage>
</organism>
<name>MSYB_ECOLI</name>
<evidence type="ECO:0000256" key="1">
    <source>
        <dbReference type="SAM" id="MobiDB-lite"/>
    </source>
</evidence>
<evidence type="ECO:0007829" key="2">
    <source>
        <dbReference type="PDB" id="8IMQ"/>
    </source>
</evidence>
<reference key="1">
    <citation type="journal article" date="1992" name="J. Bacteriol.">
        <title>Multicopy suppression: an approach to understanding intracellular functioning of the protein export system.</title>
        <authorList>
            <person name="Ueguchi C."/>
            <person name="Ito K."/>
        </authorList>
    </citation>
    <scope>NUCLEOTIDE SEQUENCE [GENOMIC DNA]</scope>
    <source>
        <strain>K12</strain>
    </source>
</reference>
<reference key="2">
    <citation type="journal article" date="1996" name="DNA Res.">
        <title>A 718-kb DNA sequence of the Escherichia coli K-12 genome corresponding to the 12.7-28.0 min region on the linkage map.</title>
        <authorList>
            <person name="Oshima T."/>
            <person name="Aiba H."/>
            <person name="Baba T."/>
            <person name="Fujita K."/>
            <person name="Hayashi K."/>
            <person name="Honjo A."/>
            <person name="Ikemoto K."/>
            <person name="Inada T."/>
            <person name="Itoh T."/>
            <person name="Kajihara M."/>
            <person name="Kanai K."/>
            <person name="Kashimoto K."/>
            <person name="Kimura S."/>
            <person name="Kitagawa M."/>
            <person name="Makino K."/>
            <person name="Masuda S."/>
            <person name="Miki T."/>
            <person name="Mizobuchi K."/>
            <person name="Mori H."/>
            <person name="Motomura K."/>
            <person name="Nakamura Y."/>
            <person name="Nashimoto H."/>
            <person name="Nishio Y."/>
            <person name="Saito N."/>
            <person name="Sampei G."/>
            <person name="Seki Y."/>
            <person name="Tagami H."/>
            <person name="Takemoto K."/>
            <person name="Wada C."/>
            <person name="Yamamoto Y."/>
            <person name="Yano M."/>
            <person name="Horiuchi T."/>
        </authorList>
    </citation>
    <scope>NUCLEOTIDE SEQUENCE [LARGE SCALE GENOMIC DNA]</scope>
    <source>
        <strain>K12 / W3110 / ATCC 27325 / DSM 5911</strain>
    </source>
</reference>
<reference key="3">
    <citation type="journal article" date="1997" name="Science">
        <title>The complete genome sequence of Escherichia coli K-12.</title>
        <authorList>
            <person name="Blattner F.R."/>
            <person name="Plunkett G. III"/>
            <person name="Bloch C.A."/>
            <person name="Perna N.T."/>
            <person name="Burland V."/>
            <person name="Riley M."/>
            <person name="Collado-Vides J."/>
            <person name="Glasner J.D."/>
            <person name="Rode C.K."/>
            <person name="Mayhew G.F."/>
            <person name="Gregor J."/>
            <person name="Davis N.W."/>
            <person name="Kirkpatrick H.A."/>
            <person name="Goeden M.A."/>
            <person name="Rose D.J."/>
            <person name="Mau B."/>
            <person name="Shao Y."/>
        </authorList>
    </citation>
    <scope>NUCLEOTIDE SEQUENCE [LARGE SCALE GENOMIC DNA]</scope>
    <source>
        <strain>K12 / MG1655 / ATCC 47076</strain>
    </source>
</reference>
<reference key="4">
    <citation type="journal article" date="2006" name="Mol. Syst. Biol.">
        <title>Highly accurate genome sequences of Escherichia coli K-12 strains MG1655 and W3110.</title>
        <authorList>
            <person name="Hayashi K."/>
            <person name="Morooka N."/>
            <person name="Yamamoto Y."/>
            <person name="Fujita K."/>
            <person name="Isono K."/>
            <person name="Choi S."/>
            <person name="Ohtsubo E."/>
            <person name="Baba T."/>
            <person name="Wanner B.L."/>
            <person name="Mori H."/>
            <person name="Horiuchi T."/>
        </authorList>
    </citation>
    <scope>NUCLEOTIDE SEQUENCE [LARGE SCALE GENOMIC DNA]</scope>
    <source>
        <strain>K12 / W3110 / ATCC 27325 / DSM 5911</strain>
    </source>
</reference>
<keyword id="KW-0002">3D-structure</keyword>
<keyword id="KW-1185">Reference proteome</keyword>
<protein>
    <recommendedName>
        <fullName>Acidic protein MsyB</fullName>
    </recommendedName>
</protein>
<accession>P25738</accession>
<accession>P75922</accession>